<evidence type="ECO:0000255" key="1"/>
<evidence type="ECO:0000255" key="2">
    <source>
        <dbReference type="HAMAP-Rule" id="MF_01260"/>
    </source>
</evidence>
<gene>
    <name evidence="2" type="primary">bioH</name>
    <name type="ordered locus">NMA2216</name>
</gene>
<accession>Q9JSN0</accession>
<accession>A1IU39</accession>
<comment type="function">
    <text evidence="2">The physiological role of BioH is to remove the methyl group introduced by BioC when the pimeloyl moiety is complete. It allows to synthesize pimeloyl-ACP via the fatty acid synthetic pathway through the hydrolysis of the ester bonds of pimeloyl-ACP esters.</text>
</comment>
<comment type="catalytic activity">
    <reaction evidence="2">
        <text>6-carboxyhexanoyl-[ACP] methyl ester + H2O = 6-carboxyhexanoyl-[ACP] + methanol + H(+)</text>
        <dbReference type="Rhea" id="RHEA:42700"/>
        <dbReference type="Rhea" id="RHEA-COMP:9955"/>
        <dbReference type="Rhea" id="RHEA-COMP:10186"/>
        <dbReference type="ChEBI" id="CHEBI:15377"/>
        <dbReference type="ChEBI" id="CHEBI:15378"/>
        <dbReference type="ChEBI" id="CHEBI:17790"/>
        <dbReference type="ChEBI" id="CHEBI:78846"/>
        <dbReference type="ChEBI" id="CHEBI:82735"/>
        <dbReference type="EC" id="3.1.1.85"/>
    </reaction>
</comment>
<comment type="pathway">
    <text evidence="2">Cofactor biosynthesis; biotin biosynthesis.</text>
</comment>
<comment type="subunit">
    <text evidence="2">Monomer.</text>
</comment>
<comment type="subcellular location">
    <subcellularLocation>
        <location evidence="2">Cytoplasm</location>
    </subcellularLocation>
</comment>
<comment type="similarity">
    <text evidence="2">Belongs to the AB hydrolase superfamily. Carboxylesterase BioH family.</text>
</comment>
<organism>
    <name type="scientific">Neisseria meningitidis serogroup A / serotype 4A (strain DSM 15465 / Z2491)</name>
    <dbReference type="NCBI Taxonomy" id="122587"/>
    <lineage>
        <taxon>Bacteria</taxon>
        <taxon>Pseudomonadati</taxon>
        <taxon>Pseudomonadota</taxon>
        <taxon>Betaproteobacteria</taxon>
        <taxon>Neisseriales</taxon>
        <taxon>Neisseriaceae</taxon>
        <taxon>Neisseria</taxon>
    </lineage>
</organism>
<name>BIOH_NEIMA</name>
<protein>
    <recommendedName>
        <fullName evidence="2">Pimeloyl-[acyl-carrier protein] methyl ester esterase</fullName>
        <ecNumber evidence="2">3.1.1.85</ecNumber>
    </recommendedName>
    <alternativeName>
        <fullName evidence="2">Biotin synthesis protein BioH</fullName>
    </alternativeName>
    <alternativeName>
        <fullName evidence="2">Carboxylesterase BioH</fullName>
    </alternativeName>
</protein>
<sequence>MRRQQERKSMPDAVKKVYLIHGWGANRHVFDDLMPRLPATWPVSAVDLPGHGDAPFAQPFDIEAAADAVAAQIDTPADILGWSLGGLVALYLAARHPDKVRSLCLTASFARLTADEDYPEGLAAPALGKMVGAFRTDYAKHIKQFLQLQLLHTPDADGIIGRILPDLARCGTPSALQEALDAAERADARHLLDKIDVPVLLVFGGKDAITPPRMGEYLHRRLKGSRLVVMEKAAHAPFLSHAEAFAALYRDFVEGVLDEPSGRTLAGLPPSCRTCRPTPDTRPQRAQTYPACRGGCGHQPQPAGETLSAGGI</sequence>
<feature type="chain" id="PRO_0000204483" description="Pimeloyl-[acyl-carrier protein] methyl ester esterase">
    <location>
        <begin position="1"/>
        <end position="312"/>
    </location>
</feature>
<feature type="domain" description="AB hydrolase-1" evidence="1">
    <location>
        <begin position="17"/>
        <end position="241"/>
    </location>
</feature>
<feature type="active site" description="Nucleophile" evidence="2">
    <location>
        <position position="83"/>
    </location>
</feature>
<feature type="active site" evidence="2">
    <location>
        <position position="207"/>
    </location>
</feature>
<feature type="active site" evidence="2">
    <location>
        <position position="235"/>
    </location>
</feature>
<feature type="binding site" evidence="2">
    <location>
        <position position="23"/>
    </location>
    <ligand>
        <name>substrate</name>
    </ligand>
</feature>
<feature type="binding site" evidence="2">
    <location>
        <begin position="83"/>
        <end position="84"/>
    </location>
    <ligand>
        <name>substrate</name>
    </ligand>
</feature>
<feature type="binding site" evidence="2">
    <location>
        <begin position="145"/>
        <end position="149"/>
    </location>
    <ligand>
        <name>substrate</name>
    </ligand>
</feature>
<feature type="binding site" evidence="2">
    <location>
        <position position="235"/>
    </location>
    <ligand>
        <name>substrate</name>
    </ligand>
</feature>
<reference key="1">
    <citation type="journal article" date="2000" name="Nature">
        <title>Complete DNA sequence of a serogroup A strain of Neisseria meningitidis Z2491.</title>
        <authorList>
            <person name="Parkhill J."/>
            <person name="Achtman M."/>
            <person name="James K.D."/>
            <person name="Bentley S.D."/>
            <person name="Churcher C.M."/>
            <person name="Klee S.R."/>
            <person name="Morelli G."/>
            <person name="Basham D."/>
            <person name="Brown D."/>
            <person name="Chillingworth T."/>
            <person name="Davies R.M."/>
            <person name="Davis P."/>
            <person name="Devlin K."/>
            <person name="Feltwell T."/>
            <person name="Hamlin N."/>
            <person name="Holroyd S."/>
            <person name="Jagels K."/>
            <person name="Leather S."/>
            <person name="Moule S."/>
            <person name="Mungall K.L."/>
            <person name="Quail M.A."/>
            <person name="Rajandream M.A."/>
            <person name="Rutherford K.M."/>
            <person name="Simmonds M."/>
            <person name="Skelton J."/>
            <person name="Whitehead S."/>
            <person name="Spratt B.G."/>
            <person name="Barrell B.G."/>
        </authorList>
    </citation>
    <scope>NUCLEOTIDE SEQUENCE [LARGE SCALE GENOMIC DNA]</scope>
    <source>
        <strain>DSM 15465 / Z2491</strain>
    </source>
</reference>
<dbReference type="EC" id="3.1.1.85" evidence="2"/>
<dbReference type="EMBL" id="AL157959">
    <property type="protein sequence ID" value="CAM09309.1"/>
    <property type="molecule type" value="Genomic_DNA"/>
</dbReference>
<dbReference type="PIR" id="C81795">
    <property type="entry name" value="C81795"/>
</dbReference>
<dbReference type="SMR" id="Q9JSN0"/>
<dbReference type="ESTHER" id="neime-NMA2216">
    <property type="family name" value="BioH"/>
</dbReference>
<dbReference type="EnsemblBacteria" id="CAM09309">
    <property type="protein sequence ID" value="CAM09309"/>
    <property type="gene ID" value="NMA2216"/>
</dbReference>
<dbReference type="KEGG" id="nma:NMA2216"/>
<dbReference type="HOGENOM" id="CLU_020336_12_2_4"/>
<dbReference type="UniPathway" id="UPA00078"/>
<dbReference type="Proteomes" id="UP000000626">
    <property type="component" value="Chromosome"/>
</dbReference>
<dbReference type="GO" id="GO:0005737">
    <property type="term" value="C:cytoplasm"/>
    <property type="evidence" value="ECO:0007669"/>
    <property type="project" value="UniProtKB-SubCell"/>
</dbReference>
<dbReference type="GO" id="GO:0016020">
    <property type="term" value="C:membrane"/>
    <property type="evidence" value="ECO:0007669"/>
    <property type="project" value="TreeGrafter"/>
</dbReference>
<dbReference type="GO" id="GO:0090499">
    <property type="term" value="F:pimelyl-[acyl-carrier protein] methyl ester esterase activity"/>
    <property type="evidence" value="ECO:0007669"/>
    <property type="project" value="UniProtKB-EC"/>
</dbReference>
<dbReference type="GO" id="GO:0009102">
    <property type="term" value="P:biotin biosynthetic process"/>
    <property type="evidence" value="ECO:0007669"/>
    <property type="project" value="UniProtKB-UniRule"/>
</dbReference>
<dbReference type="FunFam" id="3.40.50.1820:FF:000523">
    <property type="entry name" value="Pimeloyl-[acyl-carrier protein] methyl ester esterase"/>
    <property type="match status" value="1"/>
</dbReference>
<dbReference type="Gene3D" id="3.40.50.1820">
    <property type="entry name" value="alpha/beta hydrolase"/>
    <property type="match status" value="1"/>
</dbReference>
<dbReference type="HAMAP" id="MF_01260">
    <property type="entry name" value="Carboxylester"/>
    <property type="match status" value="1"/>
</dbReference>
<dbReference type="InterPro" id="IPR000073">
    <property type="entry name" value="AB_hydrolase_1"/>
</dbReference>
<dbReference type="InterPro" id="IPR029058">
    <property type="entry name" value="AB_hydrolase_fold"/>
</dbReference>
<dbReference type="InterPro" id="IPR050266">
    <property type="entry name" value="AB_hydrolase_sf"/>
</dbReference>
<dbReference type="InterPro" id="IPR010076">
    <property type="entry name" value="BioH"/>
</dbReference>
<dbReference type="NCBIfam" id="TIGR01738">
    <property type="entry name" value="bioH"/>
    <property type="match status" value="1"/>
</dbReference>
<dbReference type="PANTHER" id="PTHR43798:SF31">
    <property type="entry name" value="AB HYDROLASE SUPERFAMILY PROTEIN YCLE"/>
    <property type="match status" value="1"/>
</dbReference>
<dbReference type="PANTHER" id="PTHR43798">
    <property type="entry name" value="MONOACYLGLYCEROL LIPASE"/>
    <property type="match status" value="1"/>
</dbReference>
<dbReference type="Pfam" id="PF00561">
    <property type="entry name" value="Abhydrolase_1"/>
    <property type="match status" value="1"/>
</dbReference>
<dbReference type="SUPFAM" id="SSF53474">
    <property type="entry name" value="alpha/beta-Hydrolases"/>
    <property type="match status" value="1"/>
</dbReference>
<proteinExistence type="inferred from homology"/>
<keyword id="KW-0093">Biotin biosynthesis</keyword>
<keyword id="KW-0963">Cytoplasm</keyword>
<keyword id="KW-0378">Hydrolase</keyword>
<keyword id="KW-0719">Serine esterase</keyword>